<protein>
    <recommendedName>
        <fullName evidence="1">Methionine import ATP-binding protein MetN</fullName>
        <ecNumber evidence="1">7.4.2.11</ecNumber>
    </recommendedName>
</protein>
<feature type="chain" id="PRO_0000270251" description="Methionine import ATP-binding protein MetN">
    <location>
        <begin position="1"/>
        <end position="401"/>
    </location>
</feature>
<feature type="domain" description="ABC transporter" evidence="1">
    <location>
        <begin position="6"/>
        <end position="248"/>
    </location>
</feature>
<feature type="binding site" evidence="1">
    <location>
        <begin position="45"/>
        <end position="52"/>
    </location>
    <ligand>
        <name>ATP</name>
        <dbReference type="ChEBI" id="CHEBI:30616"/>
    </ligand>
</feature>
<accession>Q8G5P8</accession>
<sequence>MSDPIITFDHVVKEFKTRGRGANIARAVDDVSLTIDRGDIFGIIGYSGAGKSTLVRLINALERPTSGTVTVLGTDITSLSETKLRPIRQKIGMIFQQFNLFSTKTVAQNIAYPLQLDHWRKDYQDRRVNELLEFVGLSEHANKYPSQLSGGQKQRVGIARALATNPEILLADEATSALDPETTTEVLALLKRVNEEFGITIVLITHQMNVVQQIAGRVAVMSAGRVVESGDVYDVFAAPQQPVTKRFIATALSGLPEEDRVERLHHEWSGRIVTVLIRQKDVSGTQGHELKASGQNISELIAKYGVESSLLYGGIDTVKGTAIGAITYEFNGPGWHVDEFLRELAANSDVIDFGTAAKPVAYADAVAGHASYAEDRAHDPLAADTATAPAASAAAHEGANA</sequence>
<reference key="1">
    <citation type="journal article" date="2002" name="Proc. Natl. Acad. Sci. U.S.A.">
        <title>The genome sequence of Bifidobacterium longum reflects its adaptation to the human gastrointestinal tract.</title>
        <authorList>
            <person name="Schell M.A."/>
            <person name="Karmirantzou M."/>
            <person name="Snel B."/>
            <person name="Vilanova D."/>
            <person name="Berger B."/>
            <person name="Pessi G."/>
            <person name="Zwahlen M.-C."/>
            <person name="Desiere F."/>
            <person name="Bork P."/>
            <person name="Delley M."/>
            <person name="Pridmore R.D."/>
            <person name="Arigoni F."/>
        </authorList>
    </citation>
    <scope>NUCLEOTIDE SEQUENCE [LARGE SCALE GENOMIC DNA]</scope>
    <source>
        <strain>NCC 2705</strain>
    </source>
</reference>
<organism>
    <name type="scientific">Bifidobacterium longum (strain NCC 2705)</name>
    <dbReference type="NCBI Taxonomy" id="206672"/>
    <lineage>
        <taxon>Bacteria</taxon>
        <taxon>Bacillati</taxon>
        <taxon>Actinomycetota</taxon>
        <taxon>Actinomycetes</taxon>
        <taxon>Bifidobacteriales</taxon>
        <taxon>Bifidobacteriaceae</taxon>
        <taxon>Bifidobacterium</taxon>
    </lineage>
</organism>
<dbReference type="EC" id="7.4.2.11" evidence="1"/>
<dbReference type="EMBL" id="AE014295">
    <property type="protein sequence ID" value="AAN24768.1"/>
    <property type="molecule type" value="Genomic_DNA"/>
</dbReference>
<dbReference type="RefSeq" id="NP_696132.1">
    <property type="nucleotide sequence ID" value="NC_004307.2"/>
</dbReference>
<dbReference type="RefSeq" id="WP_007052046.1">
    <property type="nucleotide sequence ID" value="NC_004307.2"/>
</dbReference>
<dbReference type="SMR" id="Q8G5P8"/>
<dbReference type="STRING" id="206672.BL0956"/>
<dbReference type="EnsemblBacteria" id="AAN24768">
    <property type="protein sequence ID" value="AAN24768"/>
    <property type="gene ID" value="BL0956"/>
</dbReference>
<dbReference type="KEGG" id="blo:BL0956"/>
<dbReference type="PATRIC" id="fig|206672.9.peg.659"/>
<dbReference type="HOGENOM" id="CLU_000604_1_3_11"/>
<dbReference type="OrthoDB" id="4283894at2"/>
<dbReference type="PhylomeDB" id="Q8G5P8"/>
<dbReference type="Proteomes" id="UP000000439">
    <property type="component" value="Chromosome"/>
</dbReference>
<dbReference type="GO" id="GO:0005886">
    <property type="term" value="C:plasma membrane"/>
    <property type="evidence" value="ECO:0007669"/>
    <property type="project" value="UniProtKB-SubCell"/>
</dbReference>
<dbReference type="GO" id="GO:0033232">
    <property type="term" value="F:ABC-type D-methionine transporter activity"/>
    <property type="evidence" value="ECO:0007669"/>
    <property type="project" value="UniProtKB-EC"/>
</dbReference>
<dbReference type="GO" id="GO:0005524">
    <property type="term" value="F:ATP binding"/>
    <property type="evidence" value="ECO:0007669"/>
    <property type="project" value="UniProtKB-KW"/>
</dbReference>
<dbReference type="GO" id="GO:0016887">
    <property type="term" value="F:ATP hydrolysis activity"/>
    <property type="evidence" value="ECO:0007669"/>
    <property type="project" value="InterPro"/>
</dbReference>
<dbReference type="CDD" id="cd03258">
    <property type="entry name" value="ABC_MetN_methionine_transporter"/>
    <property type="match status" value="1"/>
</dbReference>
<dbReference type="FunFam" id="3.40.50.300:FF:000056">
    <property type="entry name" value="Cell division ATP-binding protein FtsE"/>
    <property type="match status" value="1"/>
</dbReference>
<dbReference type="Gene3D" id="3.30.70.260">
    <property type="match status" value="1"/>
</dbReference>
<dbReference type="Gene3D" id="3.40.50.300">
    <property type="entry name" value="P-loop containing nucleotide triphosphate hydrolases"/>
    <property type="match status" value="1"/>
</dbReference>
<dbReference type="InterPro" id="IPR003593">
    <property type="entry name" value="AAA+_ATPase"/>
</dbReference>
<dbReference type="InterPro" id="IPR003439">
    <property type="entry name" value="ABC_transporter-like_ATP-bd"/>
</dbReference>
<dbReference type="InterPro" id="IPR017871">
    <property type="entry name" value="ABC_transporter-like_CS"/>
</dbReference>
<dbReference type="InterPro" id="IPR045865">
    <property type="entry name" value="ACT-like_dom_sf"/>
</dbReference>
<dbReference type="InterPro" id="IPR041701">
    <property type="entry name" value="MetN_ABC"/>
</dbReference>
<dbReference type="InterPro" id="IPR050086">
    <property type="entry name" value="MetN_ABC_transporter-like"/>
</dbReference>
<dbReference type="InterPro" id="IPR018449">
    <property type="entry name" value="NIL_domain"/>
</dbReference>
<dbReference type="InterPro" id="IPR027417">
    <property type="entry name" value="P-loop_NTPase"/>
</dbReference>
<dbReference type="PANTHER" id="PTHR43166">
    <property type="entry name" value="AMINO ACID IMPORT ATP-BINDING PROTEIN"/>
    <property type="match status" value="1"/>
</dbReference>
<dbReference type="PANTHER" id="PTHR43166:SF30">
    <property type="entry name" value="METHIONINE IMPORT ATP-BINDING PROTEIN METN"/>
    <property type="match status" value="1"/>
</dbReference>
<dbReference type="Pfam" id="PF00005">
    <property type="entry name" value="ABC_tran"/>
    <property type="match status" value="1"/>
</dbReference>
<dbReference type="Pfam" id="PF09383">
    <property type="entry name" value="NIL"/>
    <property type="match status" value="1"/>
</dbReference>
<dbReference type="SMART" id="SM00382">
    <property type="entry name" value="AAA"/>
    <property type="match status" value="1"/>
</dbReference>
<dbReference type="SUPFAM" id="SSF55021">
    <property type="entry name" value="ACT-like"/>
    <property type="match status" value="1"/>
</dbReference>
<dbReference type="SUPFAM" id="SSF52540">
    <property type="entry name" value="P-loop containing nucleoside triphosphate hydrolases"/>
    <property type="match status" value="1"/>
</dbReference>
<dbReference type="PROSITE" id="PS00211">
    <property type="entry name" value="ABC_TRANSPORTER_1"/>
    <property type="match status" value="1"/>
</dbReference>
<dbReference type="PROSITE" id="PS50893">
    <property type="entry name" value="ABC_TRANSPORTER_2"/>
    <property type="match status" value="1"/>
</dbReference>
<dbReference type="PROSITE" id="PS51264">
    <property type="entry name" value="METN"/>
    <property type="match status" value="1"/>
</dbReference>
<keyword id="KW-0029">Amino-acid transport</keyword>
<keyword id="KW-0067">ATP-binding</keyword>
<keyword id="KW-1003">Cell membrane</keyword>
<keyword id="KW-0472">Membrane</keyword>
<keyword id="KW-0547">Nucleotide-binding</keyword>
<keyword id="KW-1185">Reference proteome</keyword>
<keyword id="KW-1278">Translocase</keyword>
<keyword id="KW-0813">Transport</keyword>
<proteinExistence type="inferred from homology"/>
<comment type="function">
    <text evidence="1">Part of the ABC transporter complex MetNIQ involved in methionine import. Responsible for energy coupling to the transport system.</text>
</comment>
<comment type="catalytic activity">
    <reaction evidence="1">
        <text>L-methionine(out) + ATP + H2O = L-methionine(in) + ADP + phosphate + H(+)</text>
        <dbReference type="Rhea" id="RHEA:29779"/>
        <dbReference type="ChEBI" id="CHEBI:15377"/>
        <dbReference type="ChEBI" id="CHEBI:15378"/>
        <dbReference type="ChEBI" id="CHEBI:30616"/>
        <dbReference type="ChEBI" id="CHEBI:43474"/>
        <dbReference type="ChEBI" id="CHEBI:57844"/>
        <dbReference type="ChEBI" id="CHEBI:456216"/>
        <dbReference type="EC" id="7.4.2.11"/>
    </reaction>
</comment>
<comment type="catalytic activity">
    <reaction evidence="1">
        <text>D-methionine(out) + ATP + H2O = D-methionine(in) + ADP + phosphate + H(+)</text>
        <dbReference type="Rhea" id="RHEA:29767"/>
        <dbReference type="ChEBI" id="CHEBI:15377"/>
        <dbReference type="ChEBI" id="CHEBI:15378"/>
        <dbReference type="ChEBI" id="CHEBI:30616"/>
        <dbReference type="ChEBI" id="CHEBI:43474"/>
        <dbReference type="ChEBI" id="CHEBI:57932"/>
        <dbReference type="ChEBI" id="CHEBI:456216"/>
        <dbReference type="EC" id="7.4.2.11"/>
    </reaction>
</comment>
<comment type="subunit">
    <text evidence="1">The complex is composed of two ATP-binding proteins (MetN), two transmembrane proteins (MetI) and a solute-binding protein (MetQ).</text>
</comment>
<comment type="subcellular location">
    <subcellularLocation>
        <location evidence="1">Cell membrane</location>
        <topology evidence="1">Peripheral membrane protein</topology>
    </subcellularLocation>
</comment>
<comment type="similarity">
    <text evidence="1">Belongs to the ABC transporter superfamily. Methionine importer (TC 3.A.1.24) family.</text>
</comment>
<name>METN_BIFLO</name>
<gene>
    <name evidence="1" type="primary">metN</name>
    <name type="ordered locus">BL0956</name>
</gene>
<evidence type="ECO:0000255" key="1">
    <source>
        <dbReference type="HAMAP-Rule" id="MF_01719"/>
    </source>
</evidence>